<reference key="1">
    <citation type="submission" date="2004-06" db="EMBL/GenBank/DDBJ databases">
        <title>Inactivation of the receptor tyrosine kinase ErbB4 disrupts neuroblast migration and placement in the adult forebrain.</title>
        <authorList>
            <person name="Anton E.S."/>
            <person name="Ghashghaei H.T."/>
            <person name="Weber J.L."/>
            <person name="McCann C."/>
            <person name="Fischer T.M."/>
            <person name="Cheung I.D."/>
            <person name="Gassmann M."/>
            <person name="Messing A."/>
            <person name="Klein R."/>
            <person name="Schwab M.H."/>
            <person name="Lloyd K.C."/>
            <person name="Lai C."/>
        </authorList>
    </citation>
    <scope>NUCLEOTIDE SEQUENCE [MRNA]</scope>
    <source>
        <strain>C57BL/6J</strain>
    </source>
</reference>
<reference key="2">
    <citation type="journal article" date="2009" name="PLoS Biol.">
        <title>Lineage-specific biology revealed by a finished genome assembly of the mouse.</title>
        <authorList>
            <person name="Church D.M."/>
            <person name="Goodstadt L."/>
            <person name="Hillier L.W."/>
            <person name="Zody M.C."/>
            <person name="Goldstein S."/>
            <person name="She X."/>
            <person name="Bult C.J."/>
            <person name="Agarwala R."/>
            <person name="Cherry J.L."/>
            <person name="DiCuccio M."/>
            <person name="Hlavina W."/>
            <person name="Kapustin Y."/>
            <person name="Meric P."/>
            <person name="Maglott D."/>
            <person name="Birtle Z."/>
            <person name="Marques A.C."/>
            <person name="Graves T."/>
            <person name="Zhou S."/>
            <person name="Teague B."/>
            <person name="Potamousis K."/>
            <person name="Churas C."/>
            <person name="Place M."/>
            <person name="Herschleb J."/>
            <person name="Runnheim R."/>
            <person name="Forrest D."/>
            <person name="Amos-Landgraf J."/>
            <person name="Schwartz D.C."/>
            <person name="Cheng Z."/>
            <person name="Lindblad-Toh K."/>
            <person name="Eichler E.E."/>
            <person name="Ponting C.P."/>
        </authorList>
    </citation>
    <scope>NUCLEOTIDE SEQUENCE [LARGE SCALE GENOMIC DNA]</scope>
    <source>
        <strain>C57BL/6J</strain>
    </source>
</reference>
<reference key="3">
    <citation type="journal article" date="2009" name="Nat. Neurosci.">
        <title>Nardilysin regulates axonal maturation and myelination in the central and peripheral nervous system.</title>
        <authorList>
            <person name="Ohno M."/>
            <person name="Hiraoka Y."/>
            <person name="Matsuoka T."/>
            <person name="Tomimoto H."/>
            <person name="Takao K."/>
            <person name="Miyakawa T."/>
            <person name="Oshima N."/>
            <person name="Kiyonari H."/>
            <person name="Kimura T."/>
            <person name="Kita T."/>
            <person name="Nishi E."/>
        </authorList>
    </citation>
    <scope>INTERACTION WITH NRDC AND BACE1</scope>
</reference>
<sequence length="645" mass="71382">MSERKEGRGKGKGKKKDRGSRGKPAPAEGDPSPALPPRLKEMKSQESAAGSKLVLRCETSSEYSSLRFKWFKNGNELNRRNKPQNVKIQKKPGKSELRINKASLADSGEYMCKVISKLGNDSASANITIVESNDLTTGMSASTERPYVSSESPIRISVSTEGANTSSSTSTSTTGTSHLIKCAEKEKTFCVNGGECFMVKDLSNPSRYLCKCPNEFTGDRCQNYVMASFYKHLGIEFMEAEELYQKRVLTITGICIALLVVGIMCVVAYCKTKKQRQKLHDRLRQSLRSERNNMVNIANGPHHPNPPPENVQLVNQYVSKNVISSEHIVEREVETSFSTSHYTSTAHHSTTVTQTPSHSWSNGHTESIISESHSVIMMSSVENSRHSSPAGGPRGRLHGLGGPRECNSFLRHARETPDSYRDSPHSERYVSAMTTPARMSPVDFHTPSSPKSPPSEMSPPVSSMTVSMPSVAVSPFVEEERPLLLVTPPRLREKKYDHHPQQLNSFHHNPAHQSTSLPPSPLRIVEDEEYETTQEYEPIQEPIKKVTNSRRAKRTKPNGHIANRLEMDSNPSSVSSNSESETEDERVGEDTPFLGIQNPLAASLEVAPAFRLAESRTNPAGRFSTQEELQARLSSVIANQDPIAV</sequence>
<name>NRG1_MOUSE</name>
<feature type="propeptide" id="PRO_0000456631" evidence="3">
    <location>
        <begin position="1"/>
        <end position="19"/>
    </location>
</feature>
<feature type="chain" id="PRO_0000456632" description="Pro-neuregulin-1, membrane-bound isoform" evidence="3">
    <location>
        <begin position="20"/>
        <end position="645"/>
    </location>
</feature>
<feature type="chain" id="PRO_0000456633" description="Neuregulin-1" evidence="3">
    <location>
        <begin position="20"/>
        <end position="246"/>
    </location>
</feature>
<feature type="topological domain" description="Extracellular" evidence="9">
    <location>
        <begin position="20"/>
        <end position="247"/>
    </location>
</feature>
<feature type="transmembrane region" description="Helical; Note=Internal signal sequence" evidence="4">
    <location>
        <begin position="248"/>
        <end position="268"/>
    </location>
</feature>
<feature type="topological domain" description="Cytoplasmic" evidence="9">
    <location>
        <begin position="269"/>
        <end position="645"/>
    </location>
</feature>
<feature type="domain" description="Ig-like C2-type" evidence="6">
    <location>
        <begin position="37"/>
        <end position="128"/>
    </location>
</feature>
<feature type="domain" description="EGF-like" evidence="5">
    <location>
        <begin position="178"/>
        <end position="222"/>
    </location>
</feature>
<feature type="region of interest" description="Disordered" evidence="7">
    <location>
        <begin position="1"/>
        <end position="52"/>
    </location>
</feature>
<feature type="region of interest" description="Disordered" evidence="7">
    <location>
        <begin position="139"/>
        <end position="175"/>
    </location>
</feature>
<feature type="region of interest" description="Disordered" evidence="7">
    <location>
        <begin position="340"/>
        <end position="364"/>
    </location>
</feature>
<feature type="region of interest" description="Disordered" evidence="7">
    <location>
        <begin position="380"/>
        <end position="406"/>
    </location>
</feature>
<feature type="region of interest" description="Disordered" evidence="7">
    <location>
        <begin position="433"/>
        <end position="463"/>
    </location>
</feature>
<feature type="region of interest" description="Disordered" evidence="7">
    <location>
        <begin position="531"/>
        <end position="593"/>
    </location>
</feature>
<feature type="compositionally biased region" description="Polar residues" evidence="7">
    <location>
        <begin position="139"/>
        <end position="164"/>
    </location>
</feature>
<feature type="compositionally biased region" description="Low complexity" evidence="7">
    <location>
        <begin position="165"/>
        <end position="175"/>
    </location>
</feature>
<feature type="compositionally biased region" description="Low complexity" evidence="7">
    <location>
        <begin position="340"/>
        <end position="355"/>
    </location>
</feature>
<feature type="compositionally biased region" description="Gly residues" evidence="7">
    <location>
        <begin position="392"/>
        <end position="402"/>
    </location>
</feature>
<feature type="compositionally biased region" description="Basic residues" evidence="7">
    <location>
        <begin position="547"/>
        <end position="557"/>
    </location>
</feature>
<feature type="compositionally biased region" description="Low complexity" evidence="7">
    <location>
        <begin position="568"/>
        <end position="579"/>
    </location>
</feature>
<feature type="disulfide bond" evidence="6">
    <location>
        <begin position="57"/>
        <end position="112"/>
    </location>
</feature>
<feature type="disulfide bond" evidence="5">
    <location>
        <begin position="182"/>
        <end position="196"/>
    </location>
</feature>
<feature type="disulfide bond" evidence="5">
    <location>
        <begin position="190"/>
        <end position="210"/>
    </location>
</feature>
<feature type="disulfide bond" evidence="5">
    <location>
        <begin position="212"/>
        <end position="221"/>
    </location>
</feature>
<comment type="function">
    <text evidence="2 3">Direct ligand for ERBB3 and ERBB4 tyrosine kinase receptors. Concomitantly recruits ERBB1 and ERBB2 coreceptors, resulting in ligand-stimulated tyrosine phosphorylation and activation of the ERBB receptors. Perform diverse functions such as inducing growth and differentiation of epithelial, glial, neuronal, and skeletal muscle cells; inducing expression of acetylcholine receptor in synaptic vesicles during the formation of the neuromuscular junction; stimulating lobuloalveolar budding and milk production in the mammary gland and inducing differentiation of mammary tumor cells; stimulating Schwann cell proliferation; implication in the development of the myocardium such as trabeculation of the developing heart. Binds to ERBB4 and ERBB3. Acts as a ligand for integrins and binds (via EGF domain) to integrins ITGAV:ITGB3 or ITGA6:ITGB4. Its binding to integrins and subsequent ternary complex formation with integrins and ERRB3 are essential for NRG1-ERBB signaling (By similarity). Induces the phosphorylation and activation of MAPK3/ERK1, MAPK1/ERK2 and AKT1, and ligand-dependent ERBB4 endocytosis is essential for the NRG1-mediated activation of these kinases in neurons (By similarity).</text>
</comment>
<comment type="subunit">
    <text evidence="2 3 8">The cytoplasmic domain interacts with the LIM domain region of LIMK1 (By similarity). Forms a ternary complex with ERBB3 and ITGAV:ITGB3 or ITGA6:ITGB4 (By similarity). Interacts with NRDC and BACE1 (PubMed:19935654).</text>
</comment>
<comment type="subcellular location">
    <molecule>Pro-neuregulin-1, membrane-bound isoform</molecule>
    <subcellularLocation>
        <location evidence="3">Cell membrane</location>
        <topology evidence="3">Single-pass type I membrane protein</topology>
    </subcellularLocation>
    <text evidence="3">Does not seem to be active.</text>
</comment>
<comment type="subcellular location">
    <molecule>Neuregulin-1</molecule>
    <subcellularLocation>
        <location evidence="3">Secreted</location>
    </subcellularLocation>
</comment>
<comment type="domain">
    <text evidence="1">The cytoplasmic domain may be involved in the regulation of trafficking and proteolytic processing. Regulation of the proteolytic processing involves initial intracellular domain dimerization (By similarity).</text>
</comment>
<comment type="domain">
    <text evidence="3">ERBB receptor binding is elicited entirely by the EGF-like domain.</text>
</comment>
<comment type="PTM">
    <text evidence="3">Proteolytic cleavage close to the plasma membrane on the external face leads to the release of the soluble growth factor form.</text>
</comment>
<comment type="PTM">
    <text evidence="1">N- and O-glycosylated. Extensive glycosylation precedes the proteolytic cleavage (By similarity).</text>
</comment>
<comment type="similarity">
    <text evidence="9">Belongs to the neuregulin family.</text>
</comment>
<keyword id="KW-1003">Cell membrane</keyword>
<keyword id="KW-1015">Disulfide bond</keyword>
<keyword id="KW-0245">EGF-like domain</keyword>
<keyword id="KW-0325">Glycoprotein</keyword>
<keyword id="KW-0339">Growth factor</keyword>
<keyword id="KW-0393">Immunoglobulin domain</keyword>
<keyword id="KW-0472">Membrane</keyword>
<keyword id="KW-1185">Reference proteome</keyword>
<keyword id="KW-0964">Secreted</keyword>
<keyword id="KW-0812">Transmembrane</keyword>
<keyword id="KW-1133">Transmembrane helix</keyword>
<organism>
    <name type="scientific">Mus musculus</name>
    <name type="common">Mouse</name>
    <dbReference type="NCBI Taxonomy" id="10090"/>
    <lineage>
        <taxon>Eukaryota</taxon>
        <taxon>Metazoa</taxon>
        <taxon>Chordata</taxon>
        <taxon>Craniata</taxon>
        <taxon>Vertebrata</taxon>
        <taxon>Euteleostomi</taxon>
        <taxon>Mammalia</taxon>
        <taxon>Eutheria</taxon>
        <taxon>Euarchontoglires</taxon>
        <taxon>Glires</taxon>
        <taxon>Rodentia</taxon>
        <taxon>Myomorpha</taxon>
        <taxon>Muroidea</taxon>
        <taxon>Muridae</taxon>
        <taxon>Murinae</taxon>
        <taxon>Mus</taxon>
        <taxon>Mus</taxon>
    </lineage>
</organism>
<gene>
    <name evidence="10" type="primary">Nrg1</name>
</gene>
<dbReference type="EMBL" id="AY648976">
    <property type="protein sequence ID" value="AAT68241.1"/>
    <property type="molecule type" value="mRNA"/>
</dbReference>
<dbReference type="EMBL" id="AC127374">
    <property type="status" value="NOT_ANNOTATED_CDS"/>
    <property type="molecule type" value="Genomic_DNA"/>
</dbReference>
<dbReference type="EMBL" id="AC132407">
    <property type="status" value="NOT_ANNOTATED_CDS"/>
    <property type="molecule type" value="Genomic_DNA"/>
</dbReference>
<dbReference type="EMBL" id="AC136147">
    <property type="status" value="NOT_ANNOTATED_CDS"/>
    <property type="molecule type" value="Genomic_DNA"/>
</dbReference>
<dbReference type="CCDS" id="CCDS90385.1"/>
<dbReference type="RefSeq" id="NP_001351350.1">
    <property type="nucleotide sequence ID" value="NM_001364421.2"/>
</dbReference>
<dbReference type="RefSeq" id="XP_006509143.1">
    <property type="nucleotide sequence ID" value="XM_006509080.3"/>
</dbReference>
<dbReference type="SMR" id="Q6DR98"/>
<dbReference type="FunCoup" id="Q6DR98">
    <property type="interactions" value="342"/>
</dbReference>
<dbReference type="GlyGen" id="Q6DR98">
    <property type="glycosylation" value="1 site"/>
</dbReference>
<dbReference type="iPTMnet" id="Q6DR98"/>
<dbReference type="PhosphoSitePlus" id="Q6DR98"/>
<dbReference type="ProteomicsDB" id="308638"/>
<dbReference type="Antibodypedia" id="3706">
    <property type="antibodies" value="982 antibodies from 45 providers"/>
</dbReference>
<dbReference type="Ensembl" id="ENSMUST00000207470.3">
    <property type="protein sequence ID" value="ENSMUSP00000146456.2"/>
    <property type="gene ID" value="ENSMUSG00000062991.10"/>
</dbReference>
<dbReference type="GeneID" id="211323"/>
<dbReference type="UCSC" id="uc009ljp.1">
    <property type="organism name" value="mouse"/>
</dbReference>
<dbReference type="AGR" id="MGI:96083"/>
<dbReference type="MGI" id="MGI:96083">
    <property type="gene designation" value="Nrg1"/>
</dbReference>
<dbReference type="VEuPathDB" id="HostDB:ENSMUSG00000062991"/>
<dbReference type="GeneTree" id="ENSGT00940000157326"/>
<dbReference type="BioGRID-ORCS" id="211323">
    <property type="hits" value="3 hits in 47 CRISPR screens"/>
</dbReference>
<dbReference type="ChiTaRS" id="Nrg1">
    <property type="organism name" value="mouse"/>
</dbReference>
<dbReference type="PRO" id="PR:Q6DR98"/>
<dbReference type="Proteomes" id="UP000000589">
    <property type="component" value="Chromosome 8"/>
</dbReference>
<dbReference type="Bgee" id="ENSMUSG00000062991">
    <property type="expression patterns" value="Expressed in pia mater and 171 other cell types or tissues"/>
</dbReference>
<dbReference type="ExpressionAtlas" id="Q6DR98">
    <property type="expression patterns" value="baseline and differential"/>
</dbReference>
<dbReference type="GO" id="GO:0030424">
    <property type="term" value="C:axon"/>
    <property type="evidence" value="ECO:0000314"/>
    <property type="project" value="MGI"/>
</dbReference>
<dbReference type="GO" id="GO:0005737">
    <property type="term" value="C:cytoplasm"/>
    <property type="evidence" value="ECO:0000314"/>
    <property type="project" value="MGI"/>
</dbReference>
<dbReference type="GO" id="GO:0009897">
    <property type="term" value="C:external side of plasma membrane"/>
    <property type="evidence" value="ECO:0000314"/>
    <property type="project" value="MGI"/>
</dbReference>
<dbReference type="GO" id="GO:0005615">
    <property type="term" value="C:extracellular space"/>
    <property type="evidence" value="ECO:0000316"/>
    <property type="project" value="MGI"/>
</dbReference>
<dbReference type="GO" id="GO:0098982">
    <property type="term" value="C:GABA-ergic synapse"/>
    <property type="evidence" value="ECO:0000314"/>
    <property type="project" value="SynGO"/>
</dbReference>
<dbReference type="GO" id="GO:0098978">
    <property type="term" value="C:glutamatergic synapse"/>
    <property type="evidence" value="ECO:0000314"/>
    <property type="project" value="SynGO"/>
</dbReference>
<dbReference type="GO" id="GO:0097471">
    <property type="term" value="C:mossy fiber rosette"/>
    <property type="evidence" value="ECO:0000314"/>
    <property type="project" value="SynGO"/>
</dbReference>
<dbReference type="GO" id="GO:0031594">
    <property type="term" value="C:neuromuscular junction"/>
    <property type="evidence" value="ECO:0000314"/>
    <property type="project" value="MGI"/>
</dbReference>
<dbReference type="GO" id="GO:0005886">
    <property type="term" value="C:plasma membrane"/>
    <property type="evidence" value="ECO:0000314"/>
    <property type="project" value="MGI"/>
</dbReference>
<dbReference type="GO" id="GO:0098794">
    <property type="term" value="C:postsynapse"/>
    <property type="evidence" value="ECO:0000314"/>
    <property type="project" value="SynGO"/>
</dbReference>
<dbReference type="GO" id="GO:0098839">
    <property type="term" value="C:postsynaptic density membrane"/>
    <property type="evidence" value="ECO:0000314"/>
    <property type="project" value="SynGO"/>
</dbReference>
<dbReference type="GO" id="GO:0048787">
    <property type="term" value="C:presynaptic active zone membrane"/>
    <property type="evidence" value="ECO:0000314"/>
    <property type="project" value="SynGO"/>
</dbReference>
<dbReference type="GO" id="GO:0045202">
    <property type="term" value="C:synapse"/>
    <property type="evidence" value="ECO:0000314"/>
    <property type="project" value="MGI"/>
</dbReference>
<dbReference type="GO" id="GO:0045499">
    <property type="term" value="F:chemorepellent activity"/>
    <property type="evidence" value="ECO:0000314"/>
    <property type="project" value="MGI"/>
</dbReference>
<dbReference type="GO" id="GO:0005176">
    <property type="term" value="F:ErbB-2 class receptor binding"/>
    <property type="evidence" value="ECO:0000314"/>
    <property type="project" value="MGI"/>
</dbReference>
<dbReference type="GO" id="GO:0008083">
    <property type="term" value="F:growth factor activity"/>
    <property type="evidence" value="ECO:0007669"/>
    <property type="project" value="UniProtKB-KW"/>
</dbReference>
<dbReference type="GO" id="GO:0048018">
    <property type="term" value="F:receptor ligand activity"/>
    <property type="evidence" value="ECO:0000314"/>
    <property type="project" value="MGI"/>
</dbReference>
<dbReference type="GO" id="GO:0030971">
    <property type="term" value="F:receptor tyrosine kinase binding"/>
    <property type="evidence" value="ECO:0000266"/>
    <property type="project" value="MGI"/>
</dbReference>
<dbReference type="GO" id="GO:0003712">
    <property type="term" value="F:transcription coregulator activity"/>
    <property type="evidence" value="ECO:0000266"/>
    <property type="project" value="MGI"/>
</dbReference>
<dbReference type="GO" id="GO:0003161">
    <property type="term" value="P:cardiac conduction system development"/>
    <property type="evidence" value="ECO:0000314"/>
    <property type="project" value="MGI"/>
</dbReference>
<dbReference type="GO" id="GO:0055007">
    <property type="term" value="P:cardiac muscle cell differentiation"/>
    <property type="evidence" value="ECO:0000315"/>
    <property type="project" value="BHF-UCL"/>
</dbReference>
<dbReference type="GO" id="GO:0048738">
    <property type="term" value="P:cardiac muscle tissue development"/>
    <property type="evidence" value="ECO:0000314"/>
    <property type="project" value="MGI"/>
</dbReference>
<dbReference type="GO" id="GO:0000902">
    <property type="term" value="P:cell morphogenesis"/>
    <property type="evidence" value="ECO:0000314"/>
    <property type="project" value="MGI"/>
</dbReference>
<dbReference type="GO" id="GO:0021842">
    <property type="term" value="P:chemorepulsion involved in interneuron migration from the subpallium to the cortex"/>
    <property type="evidence" value="ECO:0000315"/>
    <property type="project" value="MGI"/>
</dbReference>
<dbReference type="GO" id="GO:0050965">
    <property type="term" value="P:detection of temperature stimulus involved in sensory perception of pain"/>
    <property type="evidence" value="ECO:0000315"/>
    <property type="project" value="MGI"/>
</dbReference>
<dbReference type="GO" id="GO:0038133">
    <property type="term" value="P:ERBB2-ERBB3 signaling pathway"/>
    <property type="evidence" value="ECO:0000314"/>
    <property type="project" value="MGI"/>
</dbReference>
<dbReference type="GO" id="GO:0038135">
    <property type="term" value="P:ERBB2-ERBB4 signaling pathway"/>
    <property type="evidence" value="ECO:0000266"/>
    <property type="project" value="MGI"/>
</dbReference>
<dbReference type="GO" id="GO:0038130">
    <property type="term" value="P:ERBB4 signaling pathway"/>
    <property type="evidence" value="ECO:0000314"/>
    <property type="project" value="MGI"/>
</dbReference>
<dbReference type="GO" id="GO:0038138">
    <property type="term" value="P:ERBB4-ERBB4 signaling pathway"/>
    <property type="evidence" value="ECO:0000266"/>
    <property type="project" value="MGI"/>
</dbReference>
<dbReference type="GO" id="GO:0010001">
    <property type="term" value="P:glial cell differentiation"/>
    <property type="evidence" value="ECO:0000315"/>
    <property type="project" value="MGI"/>
</dbReference>
<dbReference type="GO" id="GO:0021781">
    <property type="term" value="P:glial cell fate commitment"/>
    <property type="evidence" value="ECO:0000314"/>
    <property type="project" value="MGI"/>
</dbReference>
<dbReference type="GO" id="GO:0007507">
    <property type="term" value="P:heart development"/>
    <property type="evidence" value="ECO:0000315"/>
    <property type="project" value="MGI"/>
</dbReference>
<dbReference type="GO" id="GO:0007626">
    <property type="term" value="P:locomotory behavior"/>
    <property type="evidence" value="ECO:0000315"/>
    <property type="project" value="MGI"/>
</dbReference>
<dbReference type="GO" id="GO:0000165">
    <property type="term" value="P:MAPK cascade"/>
    <property type="evidence" value="ECO:0000314"/>
    <property type="project" value="MGI"/>
</dbReference>
<dbReference type="GO" id="GO:0007517">
    <property type="term" value="P:muscle organ development"/>
    <property type="evidence" value="ECO:0000315"/>
    <property type="project" value="MGI"/>
</dbReference>
<dbReference type="GO" id="GO:0042552">
    <property type="term" value="P:myelination"/>
    <property type="evidence" value="ECO:0000315"/>
    <property type="project" value="MGI"/>
</dbReference>
<dbReference type="GO" id="GO:0022011">
    <property type="term" value="P:myelination in peripheral nervous system"/>
    <property type="evidence" value="ECO:0000315"/>
    <property type="project" value="MGI"/>
</dbReference>
<dbReference type="GO" id="GO:0045892">
    <property type="term" value="P:negative regulation of DNA-templated transcription"/>
    <property type="evidence" value="ECO:0000266"/>
    <property type="project" value="MGI"/>
</dbReference>
<dbReference type="GO" id="GO:2001223">
    <property type="term" value="P:negative regulation of neuron migration"/>
    <property type="evidence" value="ECO:0000314"/>
    <property type="project" value="MGI"/>
</dbReference>
<dbReference type="GO" id="GO:0042177">
    <property type="term" value="P:negative regulation of protein catabolic process"/>
    <property type="evidence" value="ECO:0000314"/>
    <property type="project" value="MGI"/>
</dbReference>
<dbReference type="GO" id="GO:0007399">
    <property type="term" value="P:nervous system development"/>
    <property type="evidence" value="ECO:0000315"/>
    <property type="project" value="MGI"/>
</dbReference>
<dbReference type="GO" id="GO:0048663">
    <property type="term" value="P:neuron fate commitment"/>
    <property type="evidence" value="ECO:0000315"/>
    <property type="project" value="MGI"/>
</dbReference>
<dbReference type="GO" id="GO:0001764">
    <property type="term" value="P:neuron migration"/>
    <property type="evidence" value="ECO:0000316"/>
    <property type="project" value="MGI"/>
</dbReference>
<dbReference type="GO" id="GO:0048709">
    <property type="term" value="P:oligodendrocyte differentiation"/>
    <property type="evidence" value="ECO:0000315"/>
    <property type="project" value="MGI"/>
</dbReference>
<dbReference type="GO" id="GO:0007422">
    <property type="term" value="P:peripheral nervous system development"/>
    <property type="evidence" value="ECO:0000315"/>
    <property type="project" value="MGI"/>
</dbReference>
<dbReference type="GO" id="GO:0043491">
    <property type="term" value="P:phosphatidylinositol 3-kinase/protein kinase B signal transduction"/>
    <property type="evidence" value="ECO:0000314"/>
    <property type="project" value="MGI"/>
</dbReference>
<dbReference type="GO" id="GO:0070886">
    <property type="term" value="P:positive regulation of calcineurin-NFAT signaling cascade"/>
    <property type="evidence" value="ECO:0000316"/>
    <property type="project" value="MGI"/>
</dbReference>
<dbReference type="GO" id="GO:0010628">
    <property type="term" value="P:positive regulation of gene expression"/>
    <property type="evidence" value="ECO:0000314"/>
    <property type="project" value="MGI"/>
</dbReference>
<dbReference type="GO" id="GO:0051897">
    <property type="term" value="P:positive regulation of phosphatidylinositol 3-kinase/protein kinase B signal transduction"/>
    <property type="evidence" value="ECO:0000314"/>
    <property type="project" value="MGI"/>
</dbReference>
<dbReference type="GO" id="GO:0046579">
    <property type="term" value="P:positive regulation of Ras protein signal transduction"/>
    <property type="evidence" value="ECO:0000314"/>
    <property type="project" value="MGI"/>
</dbReference>
<dbReference type="GO" id="GO:0051155">
    <property type="term" value="P:positive regulation of striated muscle cell differentiation"/>
    <property type="evidence" value="ECO:0000315"/>
    <property type="project" value="BHF-UCL"/>
</dbReference>
<dbReference type="GO" id="GO:0099527">
    <property type="term" value="P:postsynapse to nucleus signaling pathway"/>
    <property type="evidence" value="ECO:0000314"/>
    <property type="project" value="SynGO"/>
</dbReference>
<dbReference type="GO" id="GO:0030163">
    <property type="term" value="P:protein catabolic process"/>
    <property type="evidence" value="ECO:0000314"/>
    <property type="project" value="MGI"/>
</dbReference>
<dbReference type="GO" id="GO:0032984">
    <property type="term" value="P:protein-containing complex disassembly"/>
    <property type="evidence" value="ECO:0000266"/>
    <property type="project" value="MGI"/>
</dbReference>
<dbReference type="GO" id="GO:0045595">
    <property type="term" value="P:regulation of cell differentiation"/>
    <property type="evidence" value="ECO:0000315"/>
    <property type="project" value="MGI"/>
</dbReference>
<dbReference type="GO" id="GO:1905606">
    <property type="term" value="P:regulation of presynapse assembly"/>
    <property type="evidence" value="ECO:0000314"/>
    <property type="project" value="SynGO"/>
</dbReference>
<dbReference type="GO" id="GO:0014044">
    <property type="term" value="P:Schwann cell development"/>
    <property type="evidence" value="ECO:0000315"/>
    <property type="project" value="MGI"/>
</dbReference>
<dbReference type="GO" id="GO:0014037">
    <property type="term" value="P:Schwann cell differentiation"/>
    <property type="evidence" value="ECO:0000315"/>
    <property type="project" value="MGI"/>
</dbReference>
<dbReference type="GO" id="GO:0019233">
    <property type="term" value="P:sensory perception of pain"/>
    <property type="evidence" value="ECO:0000315"/>
    <property type="project" value="MGI"/>
</dbReference>
<dbReference type="GO" id="GO:0007416">
    <property type="term" value="P:synapse assembly"/>
    <property type="evidence" value="ECO:0000315"/>
    <property type="project" value="MGI"/>
</dbReference>
<dbReference type="GO" id="GO:0099560">
    <property type="term" value="P:synaptic membrane adhesion"/>
    <property type="evidence" value="ECO:0000314"/>
    <property type="project" value="SynGO"/>
</dbReference>
<dbReference type="CDD" id="cd00053">
    <property type="entry name" value="EGF"/>
    <property type="match status" value="1"/>
</dbReference>
<dbReference type="CDD" id="cd05895">
    <property type="entry name" value="Ig_Pro_neuregulin-1"/>
    <property type="match status" value="1"/>
</dbReference>
<dbReference type="FunFam" id="2.60.40.10:FF:000263">
    <property type="entry name" value="Pro-neuregulin-1, membrane-bound isoform"/>
    <property type="match status" value="1"/>
</dbReference>
<dbReference type="FunFam" id="2.10.25.10:FF:000073">
    <property type="entry name" value="Pro-neuregulin-1, membrane-bound isoform A"/>
    <property type="match status" value="1"/>
</dbReference>
<dbReference type="Gene3D" id="2.60.40.10">
    <property type="entry name" value="Immunoglobulins"/>
    <property type="match status" value="1"/>
</dbReference>
<dbReference type="Gene3D" id="2.10.25.10">
    <property type="entry name" value="Laminin"/>
    <property type="match status" value="1"/>
</dbReference>
<dbReference type="InterPro" id="IPR000742">
    <property type="entry name" value="EGF-like_dom"/>
</dbReference>
<dbReference type="InterPro" id="IPR007110">
    <property type="entry name" value="Ig-like_dom"/>
</dbReference>
<dbReference type="InterPro" id="IPR036179">
    <property type="entry name" value="Ig-like_dom_sf"/>
</dbReference>
<dbReference type="InterPro" id="IPR013783">
    <property type="entry name" value="Ig-like_fold"/>
</dbReference>
<dbReference type="InterPro" id="IPR013098">
    <property type="entry name" value="Ig_I-set"/>
</dbReference>
<dbReference type="InterPro" id="IPR003599">
    <property type="entry name" value="Ig_sub"/>
</dbReference>
<dbReference type="InterPro" id="IPR003598">
    <property type="entry name" value="Ig_sub2"/>
</dbReference>
<dbReference type="InterPro" id="IPR040180">
    <property type="entry name" value="Neuregulin"/>
</dbReference>
<dbReference type="InterPro" id="IPR002154">
    <property type="entry name" value="Neuregulin_C"/>
</dbReference>
<dbReference type="InterPro" id="IPR018250">
    <property type="entry name" value="NRG1"/>
</dbReference>
<dbReference type="PANTHER" id="PTHR11100">
    <property type="entry name" value="HEREGULIN-NEUREGULIN FAMILY MEMBER"/>
    <property type="match status" value="1"/>
</dbReference>
<dbReference type="PANTHER" id="PTHR11100:SF7">
    <property type="entry name" value="PRO-NEUREGULIN-1, MEMBRANE-BOUND ISOFORM"/>
    <property type="match status" value="1"/>
</dbReference>
<dbReference type="Pfam" id="PF07679">
    <property type="entry name" value="I-set"/>
    <property type="match status" value="1"/>
</dbReference>
<dbReference type="Pfam" id="PF02158">
    <property type="entry name" value="Neuregulin"/>
    <property type="match status" value="1"/>
</dbReference>
<dbReference type="PRINTS" id="PR01089">
    <property type="entry name" value="NEUREGULIN"/>
</dbReference>
<dbReference type="SMART" id="SM00181">
    <property type="entry name" value="EGF"/>
    <property type="match status" value="1"/>
</dbReference>
<dbReference type="SMART" id="SM00409">
    <property type="entry name" value="IG"/>
    <property type="match status" value="1"/>
</dbReference>
<dbReference type="SMART" id="SM00408">
    <property type="entry name" value="IGc2"/>
    <property type="match status" value="1"/>
</dbReference>
<dbReference type="SUPFAM" id="SSF57196">
    <property type="entry name" value="EGF/Laminin"/>
    <property type="match status" value="1"/>
</dbReference>
<dbReference type="SUPFAM" id="SSF48726">
    <property type="entry name" value="Immunoglobulin"/>
    <property type="match status" value="1"/>
</dbReference>
<dbReference type="PROSITE" id="PS00022">
    <property type="entry name" value="EGF_1"/>
    <property type="match status" value="1"/>
</dbReference>
<dbReference type="PROSITE" id="PS50026">
    <property type="entry name" value="EGF_3"/>
    <property type="match status" value="1"/>
</dbReference>
<dbReference type="PROSITE" id="PS50835">
    <property type="entry name" value="IG_LIKE"/>
    <property type="match status" value="1"/>
</dbReference>
<proteinExistence type="evidence at protein level"/>
<evidence type="ECO:0000250" key="1"/>
<evidence type="ECO:0000250" key="2">
    <source>
        <dbReference type="UniProtKB" id="P43322"/>
    </source>
</evidence>
<evidence type="ECO:0000250" key="3">
    <source>
        <dbReference type="UniProtKB" id="Q02297"/>
    </source>
</evidence>
<evidence type="ECO:0000255" key="4"/>
<evidence type="ECO:0000255" key="5">
    <source>
        <dbReference type="PROSITE-ProRule" id="PRU00076"/>
    </source>
</evidence>
<evidence type="ECO:0000255" key="6">
    <source>
        <dbReference type="PROSITE-ProRule" id="PRU00114"/>
    </source>
</evidence>
<evidence type="ECO:0000256" key="7">
    <source>
        <dbReference type="SAM" id="MobiDB-lite"/>
    </source>
</evidence>
<evidence type="ECO:0000269" key="8">
    <source>
    </source>
</evidence>
<evidence type="ECO:0000305" key="9"/>
<evidence type="ECO:0000312" key="10">
    <source>
        <dbReference type="MGI" id="MGI:96083"/>
    </source>
</evidence>
<accession>Q6DR98</accession>
<protein>
    <recommendedName>
        <fullName>Pro-neuregulin-1, membrane-bound isoform</fullName>
        <shortName>Pro-NRG1</shortName>
    </recommendedName>
    <component>
        <recommendedName>
            <fullName>Neuregulin-1</fullName>
        </recommendedName>
        <alternativeName>
            <fullName>Acetylcholine receptor-inducing activity</fullName>
            <shortName>ARIA</shortName>
        </alternativeName>
        <alternativeName>
            <fullName>Glial growth factor</fullName>
        </alternativeName>
        <alternativeName>
            <fullName>Heregulin</fullName>
            <shortName>HRG</shortName>
        </alternativeName>
        <alternativeName>
            <fullName>Neu differentiation factor</fullName>
        </alternativeName>
        <alternativeName>
            <fullName>Sensory and motor neuron-derived factor</fullName>
        </alternativeName>
    </component>
</protein>